<keyword id="KW-1185">Reference proteome</keyword>
<keyword id="KW-0677">Repeat</keyword>
<gene>
    <name type="primary">PCMP-H52</name>
    <name type="synonym">PCMP-H30</name>
    <name type="ordered locus">At5g52630</name>
    <name type="ORF">F6N7.12</name>
</gene>
<proteinExistence type="inferred from homology"/>
<feature type="chain" id="PRO_0000363566" description="Putative pentatricopeptide repeat-containing protein At5g52630">
    <location>
        <begin position="1"/>
        <end position="588"/>
    </location>
</feature>
<feature type="repeat" description="PPR 1">
    <location>
        <begin position="14"/>
        <end position="48"/>
    </location>
</feature>
<feature type="repeat" description="PPR 2">
    <location>
        <begin position="49"/>
        <end position="79"/>
    </location>
</feature>
<feature type="repeat" description="PPR 3">
    <location>
        <begin position="80"/>
        <end position="114"/>
    </location>
</feature>
<feature type="repeat" description="PPR 4">
    <location>
        <begin position="115"/>
        <end position="149"/>
    </location>
</feature>
<feature type="repeat" description="PPR 5">
    <location>
        <begin position="150"/>
        <end position="180"/>
    </location>
</feature>
<feature type="repeat" description="PPR 6">
    <location>
        <begin position="181"/>
        <end position="215"/>
    </location>
</feature>
<feature type="repeat" description="PPR 7">
    <location>
        <begin position="216"/>
        <end position="250"/>
    </location>
</feature>
<feature type="repeat" description="PPR 8">
    <location>
        <begin position="251"/>
        <end position="281"/>
    </location>
</feature>
<feature type="repeat" description="PPR 9">
    <location>
        <begin position="282"/>
        <end position="316"/>
    </location>
</feature>
<feature type="repeat" description="PPR 10">
    <location>
        <begin position="317"/>
        <end position="351"/>
    </location>
</feature>
<feature type="repeat" description="PPR 11">
    <location>
        <begin position="352"/>
        <end position="386"/>
    </location>
</feature>
<feature type="region of interest" description="Type E motif">
    <location>
        <begin position="387"/>
        <end position="462"/>
    </location>
</feature>
<feature type="region of interest" description="Type E(+) motif">
    <location>
        <begin position="463"/>
        <end position="493"/>
    </location>
</feature>
<feature type="region of interest" description="Type DYW motif">
    <location>
        <begin position="494"/>
        <end position="588"/>
    </location>
</feature>
<evidence type="ECO:0000305" key="1"/>
<sequence>MALNSSAFFVPCHNYNQICDLLLSSARTRSTIKGLQLHGYVVKSGLSLIPLVANNLINFYSKSQLPFDSRRAFEDSPQKSSTTWSSIISCFAQNELPWMSLEFLKKMMAGNLRPDDHVLPSATKSCAILSRCDIGRSVHCLSMKTGYDADVFVGSSLVDMYAKCGEIVYARKMFDEMPQRNVVTWSGMMYGYAQMGENEEALWLFKEALFENLAVNDYSFSSVISVCANSTLLELGRQIHGLSIKSSFDSSSFVGSSLVSLYSKCGVPEGAYQVFNEVPVKNLGIWNAMLKAYAQHSHTQKVIELFKRMKLSGMKPNFITFLNVLNACSHAGLVDEGRYYFDQMKESRIEPTDKHYASLVDMLGRAGRLQEALEVITNMPIDPTESVWGALLTSCTVHKNTELAAFAADKVFELGPVSSGMHISLSNAYAADGRFEDAAKARKLLRDRGEKKETGLSWVEERNKVHTFAAGERRHEKSKEIYEKLAELGEEMEKAGYIADTSYVLREVDGDEKNQTIRYHSERLAIAFGLITFPADRPIRVMKNLRVCGDCHNAIKFMSVCTRRVIIVRDNNRFHRFEDGKCSCNDYW</sequence>
<comment type="similarity">
    <text evidence="1">Belongs to the PPR family. PCMP-H subfamily.</text>
</comment>
<comment type="online information" name="Pentatricopeptide repeat proteins">
    <link uri="https://ppr.plantenergy.uwa.edu.au"/>
</comment>
<reference key="1">
    <citation type="submission" date="1999-04" db="EMBL/GenBank/DDBJ databases">
        <title>Structural analysis of Arabidopsis thaliana chromosome 5. XI.</title>
        <authorList>
            <person name="Kaneko T."/>
            <person name="Katoh T."/>
            <person name="Asamizu E."/>
            <person name="Sato S."/>
            <person name="Nakamura Y."/>
            <person name="Kotani H."/>
            <person name="Tabata S."/>
        </authorList>
    </citation>
    <scope>NUCLEOTIDE SEQUENCE [LARGE SCALE GENOMIC DNA]</scope>
    <source>
        <strain>cv. Columbia</strain>
    </source>
</reference>
<reference key="2">
    <citation type="journal article" date="2017" name="Plant J.">
        <title>Araport11: a complete reannotation of the Arabidopsis thaliana reference genome.</title>
        <authorList>
            <person name="Cheng C.Y."/>
            <person name="Krishnakumar V."/>
            <person name="Chan A.P."/>
            <person name="Thibaud-Nissen F."/>
            <person name="Schobel S."/>
            <person name="Town C.D."/>
        </authorList>
    </citation>
    <scope>GENOME REANNOTATION</scope>
    <source>
        <strain>cv. Columbia</strain>
    </source>
</reference>
<reference key="3">
    <citation type="journal article" date="2000" name="Plant Mol. Biol.">
        <title>In Arabidopsis thaliana, 1% of the genome codes for a novel protein family unique to plants.</title>
        <authorList>
            <person name="Aubourg S."/>
            <person name="Boudet N."/>
            <person name="Kreis M."/>
            <person name="Lecharny A."/>
        </authorList>
    </citation>
    <scope>GENE FAMILY</scope>
</reference>
<reference key="4">
    <citation type="journal article" date="2004" name="Plant Cell">
        <title>Genome-wide analysis of Arabidopsis pentatricopeptide repeat proteins reveals their essential role in organelle biogenesis.</title>
        <authorList>
            <person name="Lurin C."/>
            <person name="Andres C."/>
            <person name="Aubourg S."/>
            <person name="Bellaoui M."/>
            <person name="Bitton F."/>
            <person name="Bruyere C."/>
            <person name="Caboche M."/>
            <person name="Debast C."/>
            <person name="Gualberto J."/>
            <person name="Hoffmann B."/>
            <person name="Lecharny A."/>
            <person name="Le Ret M."/>
            <person name="Martin-Magniette M.-L."/>
            <person name="Mireau H."/>
            <person name="Peeters N."/>
            <person name="Renou J.-P."/>
            <person name="Szurek B."/>
            <person name="Taconnat L."/>
            <person name="Small I."/>
        </authorList>
    </citation>
    <scope>GENE FAMILY</scope>
</reference>
<organism>
    <name type="scientific">Arabidopsis thaliana</name>
    <name type="common">Mouse-ear cress</name>
    <dbReference type="NCBI Taxonomy" id="3702"/>
    <lineage>
        <taxon>Eukaryota</taxon>
        <taxon>Viridiplantae</taxon>
        <taxon>Streptophyta</taxon>
        <taxon>Embryophyta</taxon>
        <taxon>Tracheophyta</taxon>
        <taxon>Spermatophyta</taxon>
        <taxon>Magnoliopsida</taxon>
        <taxon>eudicotyledons</taxon>
        <taxon>Gunneridae</taxon>
        <taxon>Pentapetalae</taxon>
        <taxon>rosids</taxon>
        <taxon>malvids</taxon>
        <taxon>Brassicales</taxon>
        <taxon>Brassicaceae</taxon>
        <taxon>Camelineae</taxon>
        <taxon>Arabidopsis</taxon>
    </lineage>
</organism>
<dbReference type="EMBL" id="AB025606">
    <property type="protein sequence ID" value="BAA98081.1"/>
    <property type="molecule type" value="Genomic_DNA"/>
</dbReference>
<dbReference type="EMBL" id="CP002688">
    <property type="protein sequence ID" value="AED96243.1"/>
    <property type="molecule type" value="Genomic_DNA"/>
</dbReference>
<dbReference type="RefSeq" id="NP_200075.1">
    <property type="nucleotide sequence ID" value="NM_124641.2"/>
</dbReference>
<dbReference type="SMR" id="Q9LTF4"/>
<dbReference type="BioGRID" id="20585">
    <property type="interactions" value="3"/>
</dbReference>
<dbReference type="FunCoup" id="Q9LTF4">
    <property type="interactions" value="108"/>
</dbReference>
<dbReference type="STRING" id="3702.Q9LTF4"/>
<dbReference type="GlyGen" id="Q9LTF4">
    <property type="glycosylation" value="1 site"/>
</dbReference>
<dbReference type="PaxDb" id="3702-AT5G52630.1"/>
<dbReference type="ProteomicsDB" id="249310"/>
<dbReference type="EnsemblPlants" id="AT5G52630.1">
    <property type="protein sequence ID" value="AT5G52630.1"/>
    <property type="gene ID" value="AT5G52630"/>
</dbReference>
<dbReference type="GeneID" id="835340"/>
<dbReference type="Gramene" id="AT5G52630.1">
    <property type="protein sequence ID" value="AT5G52630.1"/>
    <property type="gene ID" value="AT5G52630"/>
</dbReference>
<dbReference type="KEGG" id="ath:AT5G52630"/>
<dbReference type="Araport" id="AT5G52630"/>
<dbReference type="TAIR" id="AT5G52630">
    <property type="gene designation" value="MEF1"/>
</dbReference>
<dbReference type="eggNOG" id="KOG4197">
    <property type="taxonomic scope" value="Eukaryota"/>
</dbReference>
<dbReference type="HOGENOM" id="CLU_002706_37_8_1"/>
<dbReference type="InParanoid" id="Q9LTF4"/>
<dbReference type="OMA" id="WNSMLIA"/>
<dbReference type="PhylomeDB" id="Q9LTF4"/>
<dbReference type="PRO" id="PR:Q9LTF4"/>
<dbReference type="Proteomes" id="UP000006548">
    <property type="component" value="Chromosome 5"/>
</dbReference>
<dbReference type="ExpressionAtlas" id="Q9LTF4">
    <property type="expression patterns" value="baseline and differential"/>
</dbReference>
<dbReference type="GO" id="GO:0003723">
    <property type="term" value="F:RNA binding"/>
    <property type="evidence" value="ECO:0007669"/>
    <property type="project" value="InterPro"/>
</dbReference>
<dbReference type="GO" id="GO:0008270">
    <property type="term" value="F:zinc ion binding"/>
    <property type="evidence" value="ECO:0007669"/>
    <property type="project" value="InterPro"/>
</dbReference>
<dbReference type="GO" id="GO:0016554">
    <property type="term" value="P:cytidine to uridine editing"/>
    <property type="evidence" value="ECO:0000315"/>
    <property type="project" value="TAIR"/>
</dbReference>
<dbReference type="FunFam" id="1.25.40.10:FF:000517">
    <property type="entry name" value="Pentatricopeptide repeat-containing protein At1g50270"/>
    <property type="match status" value="1"/>
</dbReference>
<dbReference type="FunFam" id="1.25.40.10:FF:000407">
    <property type="entry name" value="Putative pentatricopeptide repeat-containing protein"/>
    <property type="match status" value="1"/>
</dbReference>
<dbReference type="FunFam" id="1.25.40.10:FF:001136">
    <property type="entry name" value="Putative pentatricopeptide repeat-containing protein"/>
    <property type="match status" value="1"/>
</dbReference>
<dbReference type="Gene3D" id="1.25.40.10">
    <property type="entry name" value="Tetratricopeptide repeat domain"/>
    <property type="match status" value="3"/>
</dbReference>
<dbReference type="InterPro" id="IPR032867">
    <property type="entry name" value="DYW_dom"/>
</dbReference>
<dbReference type="InterPro" id="IPR046848">
    <property type="entry name" value="E_motif"/>
</dbReference>
<dbReference type="InterPro" id="IPR002885">
    <property type="entry name" value="Pentatricopeptide_rpt"/>
</dbReference>
<dbReference type="InterPro" id="IPR046960">
    <property type="entry name" value="PPR_At4g14850-like_plant"/>
</dbReference>
<dbReference type="InterPro" id="IPR011990">
    <property type="entry name" value="TPR-like_helical_dom_sf"/>
</dbReference>
<dbReference type="NCBIfam" id="TIGR00756">
    <property type="entry name" value="PPR"/>
    <property type="match status" value="2"/>
</dbReference>
<dbReference type="PANTHER" id="PTHR47926:SF351">
    <property type="entry name" value="MITOCHONDRIAL RNAEDITING FACTOR 1"/>
    <property type="match status" value="1"/>
</dbReference>
<dbReference type="PANTHER" id="PTHR47926">
    <property type="entry name" value="PENTATRICOPEPTIDE REPEAT-CONTAINING PROTEIN"/>
    <property type="match status" value="1"/>
</dbReference>
<dbReference type="Pfam" id="PF14432">
    <property type="entry name" value="DYW_deaminase"/>
    <property type="match status" value="1"/>
</dbReference>
<dbReference type="Pfam" id="PF20431">
    <property type="entry name" value="E_motif"/>
    <property type="match status" value="1"/>
</dbReference>
<dbReference type="Pfam" id="PF01535">
    <property type="entry name" value="PPR"/>
    <property type="match status" value="5"/>
</dbReference>
<dbReference type="Pfam" id="PF13041">
    <property type="entry name" value="PPR_2"/>
    <property type="match status" value="1"/>
</dbReference>
<dbReference type="SUPFAM" id="SSF48452">
    <property type="entry name" value="TPR-like"/>
    <property type="match status" value="1"/>
</dbReference>
<dbReference type="PROSITE" id="PS51375">
    <property type="entry name" value="PPR"/>
    <property type="match status" value="9"/>
</dbReference>
<accession>Q9LTF4</accession>
<protein>
    <recommendedName>
        <fullName>Putative pentatricopeptide repeat-containing protein At5g52630</fullName>
    </recommendedName>
</protein>
<name>PP429_ARATH</name>